<accession>P9WNX6</accession>
<accession>L0T7R6</accession>
<accession>P96417</accession>
<accession>Q7D824</accession>
<dbReference type="EC" id="1.2.1.79"/>
<dbReference type="EMBL" id="AE000516">
    <property type="protein sequence ID" value="AAK46045.1"/>
    <property type="molecule type" value="Genomic_DNA"/>
</dbReference>
<dbReference type="PIR" id="H70962">
    <property type="entry name" value="H70962"/>
</dbReference>
<dbReference type="RefSeq" id="WP_003898989.1">
    <property type="nucleotide sequence ID" value="NZ_KK341227.1"/>
</dbReference>
<dbReference type="SMR" id="P9WNX6"/>
<dbReference type="KEGG" id="mtc:MT1772"/>
<dbReference type="PATRIC" id="fig|83331.31.peg.1901"/>
<dbReference type="HOGENOM" id="CLU_005391_1_0_11"/>
<dbReference type="Proteomes" id="UP000001020">
    <property type="component" value="Chromosome"/>
</dbReference>
<dbReference type="GO" id="GO:0036243">
    <property type="term" value="F:succinate-semialdehyde dehydrogenase (NADP+) activity"/>
    <property type="evidence" value="ECO:0007669"/>
    <property type="project" value="UniProtKB-EC"/>
</dbReference>
<dbReference type="CDD" id="cd07101">
    <property type="entry name" value="ALDH_SSADH2_GabD2"/>
    <property type="match status" value="1"/>
</dbReference>
<dbReference type="FunFam" id="3.40.309.10:FF:000009">
    <property type="entry name" value="Aldehyde dehydrogenase A"/>
    <property type="match status" value="1"/>
</dbReference>
<dbReference type="FunFam" id="3.40.605.10:FF:000010">
    <property type="entry name" value="N-succinylglutamate 5-semialdehyde dehydrogenase"/>
    <property type="match status" value="1"/>
</dbReference>
<dbReference type="Gene3D" id="3.40.605.10">
    <property type="entry name" value="Aldehyde Dehydrogenase, Chain A, domain 1"/>
    <property type="match status" value="1"/>
</dbReference>
<dbReference type="Gene3D" id="3.40.309.10">
    <property type="entry name" value="Aldehyde Dehydrogenase, Chain A, domain 2"/>
    <property type="match status" value="1"/>
</dbReference>
<dbReference type="InterPro" id="IPR016161">
    <property type="entry name" value="Ald_DH/histidinol_DH"/>
</dbReference>
<dbReference type="InterPro" id="IPR016163">
    <property type="entry name" value="Ald_DH_C"/>
</dbReference>
<dbReference type="InterPro" id="IPR029510">
    <property type="entry name" value="Ald_DH_CS_GLU"/>
</dbReference>
<dbReference type="InterPro" id="IPR016162">
    <property type="entry name" value="Ald_DH_N"/>
</dbReference>
<dbReference type="InterPro" id="IPR015590">
    <property type="entry name" value="Aldehyde_DH_dom"/>
</dbReference>
<dbReference type="NCBIfam" id="NF006916">
    <property type="entry name" value="PRK09407.1"/>
    <property type="match status" value="1"/>
</dbReference>
<dbReference type="PANTHER" id="PTHR11699">
    <property type="entry name" value="ALDEHYDE DEHYDROGENASE-RELATED"/>
    <property type="match status" value="1"/>
</dbReference>
<dbReference type="Pfam" id="PF00171">
    <property type="entry name" value="Aldedh"/>
    <property type="match status" value="1"/>
</dbReference>
<dbReference type="SUPFAM" id="SSF53720">
    <property type="entry name" value="ALDH-like"/>
    <property type="match status" value="1"/>
</dbReference>
<dbReference type="PROSITE" id="PS00687">
    <property type="entry name" value="ALDEHYDE_DEHYDR_GLU"/>
    <property type="match status" value="1"/>
</dbReference>
<organism>
    <name type="scientific">Mycobacterium tuberculosis (strain CDC 1551 / Oshkosh)</name>
    <dbReference type="NCBI Taxonomy" id="83331"/>
    <lineage>
        <taxon>Bacteria</taxon>
        <taxon>Bacillati</taxon>
        <taxon>Actinomycetota</taxon>
        <taxon>Actinomycetes</taxon>
        <taxon>Mycobacteriales</taxon>
        <taxon>Mycobacteriaceae</taxon>
        <taxon>Mycobacterium</taxon>
        <taxon>Mycobacterium tuberculosis complex</taxon>
    </lineage>
</organism>
<reference key="1">
    <citation type="journal article" date="2002" name="J. Bacteriol.">
        <title>Whole-genome comparison of Mycobacterium tuberculosis clinical and laboratory strains.</title>
        <authorList>
            <person name="Fleischmann R.D."/>
            <person name="Alland D."/>
            <person name="Eisen J.A."/>
            <person name="Carpenter L."/>
            <person name="White O."/>
            <person name="Peterson J.D."/>
            <person name="DeBoy R.T."/>
            <person name="Dodson R.J."/>
            <person name="Gwinn M.L."/>
            <person name="Haft D.H."/>
            <person name="Hickey E.K."/>
            <person name="Kolonay J.F."/>
            <person name="Nelson W.C."/>
            <person name="Umayam L.A."/>
            <person name="Ermolaeva M.D."/>
            <person name="Salzberg S.L."/>
            <person name="Delcher A."/>
            <person name="Utterback T.R."/>
            <person name="Weidman J.F."/>
            <person name="Khouri H.M."/>
            <person name="Gill J."/>
            <person name="Mikula A."/>
            <person name="Bishai W."/>
            <person name="Jacobs W.R. Jr."/>
            <person name="Venter J.C."/>
            <person name="Fraser C.M."/>
        </authorList>
    </citation>
    <scope>NUCLEOTIDE SEQUENCE [LARGE SCALE GENOMIC DNA]</scope>
    <source>
        <strain>CDC 1551 / Oshkosh</strain>
    </source>
</reference>
<keyword id="KW-0521">NADP</keyword>
<keyword id="KW-0560">Oxidoreductase</keyword>
<keyword id="KW-1185">Reference proteome</keyword>
<comment type="function">
    <text evidence="1">Catalyzes the NADP(+)-dependent oxidation of succinate semialdehyde to succinate. Although it has succinate semialdehyde dehydrogenase activity, is likely to act physiologically on a different aldehyde(s) (By similarity).</text>
</comment>
<comment type="catalytic activity">
    <reaction>
        <text>succinate semialdehyde + NADP(+) + H2O = succinate + NADPH + 2 H(+)</text>
        <dbReference type="Rhea" id="RHEA:13213"/>
        <dbReference type="ChEBI" id="CHEBI:15377"/>
        <dbReference type="ChEBI" id="CHEBI:15378"/>
        <dbReference type="ChEBI" id="CHEBI:30031"/>
        <dbReference type="ChEBI" id="CHEBI:57706"/>
        <dbReference type="ChEBI" id="CHEBI:57783"/>
        <dbReference type="ChEBI" id="CHEBI:58349"/>
        <dbReference type="EC" id="1.2.1.79"/>
    </reaction>
</comment>
<comment type="similarity">
    <text evidence="3">Belongs to the aldehyde dehydrogenase family.</text>
</comment>
<sequence>MPAPSAEVFDRLRNLAAIKDVAARPTRTIDEVFTGKPLTTIPVGTAADVEAAFAEARAAQTDWAKRPVIERAAVIRRYRDLVIENREFLMDLLQAEAGKARWAAQEEIVDLIANANYYARVCVDLLKPRKAQPLLPGIGKTTVCYQPKGVVGVISPWNYPMTLTVSDSVPALVAGNAVVLKPDSQTPYCALACAELLYRAGLPRALYAIVPGPGSVVGTAITDNCDYLMFTGSSATGSRLAEHAGRRLIGFSAELGGKNPMIVARGANLDKVAKAATRACFSNAGQLCISIERIYVEKDIAEEFTRKFGDAVRNMKLGTAYDFSVDMGSLISEAQLKTVSGHVDDATAKGAKVIAGGKARPDIGPLFYEPTVLTNVAPEMECAANETFGPVVSIYPVADVDEAVEKANDTDYGLNASVWAGSTAEGQRIAARLRSGTVNVDEGYAFAWGSLSAPMGGMGLSGVGRRHGPEGLLKYTESQTIATARVFNLDPPFGIPATVWQKSLLPIVRTVMKLPGRR</sequence>
<feature type="chain" id="PRO_0000427050" description="Putative succinate-semialdehyde dehydrogenase [NADP(+)] 2">
    <location>
        <begin position="1"/>
        <end position="518"/>
    </location>
</feature>
<feature type="active site" description="Proton acceptor" evidence="2">
    <location>
        <position position="254"/>
    </location>
</feature>
<feature type="active site" description="Nucleophile" evidence="2">
    <location>
        <position position="288"/>
    </location>
</feature>
<feature type="binding site" evidence="1">
    <location>
        <begin position="157"/>
        <end position="158"/>
    </location>
    <ligand>
        <name>NADP(+)</name>
        <dbReference type="ChEBI" id="CHEBI:58349"/>
    </ligand>
</feature>
<feature type="binding site" evidence="1">
    <location>
        <begin position="181"/>
        <end position="184"/>
    </location>
    <ligand>
        <name>NADP(+)</name>
        <dbReference type="ChEBI" id="CHEBI:58349"/>
    </ligand>
</feature>
<feature type="binding site" evidence="1">
    <location>
        <begin position="232"/>
        <end position="233"/>
    </location>
    <ligand>
        <name>NADP(+)</name>
        <dbReference type="ChEBI" id="CHEBI:58349"/>
    </ligand>
</feature>
<feature type="binding site" evidence="1">
    <location>
        <position position="255"/>
    </location>
    <ligand>
        <name>NADP(+)</name>
        <dbReference type="ChEBI" id="CHEBI:58349"/>
    </ligand>
</feature>
<feature type="binding site" evidence="1">
    <location>
        <position position="386"/>
    </location>
    <ligand>
        <name>NADP(+)</name>
        <dbReference type="ChEBI" id="CHEBI:58349"/>
    </ligand>
</feature>
<protein>
    <recommendedName>
        <fullName>Putative succinate-semialdehyde dehydrogenase [NADP(+)] 2</fullName>
        <shortName>SSADH 2</shortName>
        <shortName>SSDH 2</shortName>
        <ecNumber>1.2.1.79</ecNumber>
    </recommendedName>
</protein>
<name>GABD2_MYCTO</name>
<gene>
    <name type="primary">gabD2</name>
    <name type="ordered locus">MT1772</name>
</gene>
<proteinExistence type="inferred from homology"/>
<evidence type="ECO:0000250" key="1"/>
<evidence type="ECO:0000255" key="2">
    <source>
        <dbReference type="PROSITE-ProRule" id="PRU10007"/>
    </source>
</evidence>
<evidence type="ECO:0000305" key="3"/>